<evidence type="ECO:0000255" key="1"/>
<evidence type="ECO:0000255" key="2">
    <source>
        <dbReference type="PROSITE-ProRule" id="PRU00714"/>
    </source>
</evidence>
<evidence type="ECO:0000256" key="3">
    <source>
        <dbReference type="SAM" id="MobiDB-lite"/>
    </source>
</evidence>
<evidence type="ECO:0000305" key="4"/>
<feature type="chain" id="PRO_0000398568" description="SPX domain-containing membrane protein At4g11810">
    <location>
        <begin position="1"/>
        <end position="707"/>
    </location>
</feature>
<feature type="transmembrane region" description="Helical" evidence="1">
    <location>
        <begin position="252"/>
        <end position="272"/>
    </location>
</feature>
<feature type="transmembrane region" description="Helical" evidence="1">
    <location>
        <begin position="283"/>
        <end position="303"/>
    </location>
</feature>
<feature type="transmembrane region" description="Helical" evidence="1">
    <location>
        <begin position="320"/>
        <end position="340"/>
    </location>
</feature>
<feature type="transmembrane region" description="Helical" evidence="1">
    <location>
        <begin position="342"/>
        <end position="361"/>
    </location>
</feature>
<feature type="transmembrane region" description="Helical" evidence="1">
    <location>
        <begin position="380"/>
        <end position="400"/>
    </location>
</feature>
<feature type="transmembrane region" description="Helical" evidence="1">
    <location>
        <begin position="416"/>
        <end position="436"/>
    </location>
</feature>
<feature type="transmembrane region" description="Helical" evidence="1">
    <location>
        <begin position="523"/>
        <end position="543"/>
    </location>
</feature>
<feature type="transmembrane region" description="Helical" evidence="1">
    <location>
        <begin position="557"/>
        <end position="577"/>
    </location>
</feature>
<feature type="transmembrane region" description="Helical" evidence="1">
    <location>
        <begin position="586"/>
        <end position="606"/>
    </location>
</feature>
<feature type="transmembrane region" description="Helical" evidence="1">
    <location>
        <begin position="614"/>
        <end position="634"/>
    </location>
</feature>
<feature type="transmembrane region" description="Helical" evidence="1">
    <location>
        <begin position="679"/>
        <end position="699"/>
    </location>
</feature>
<feature type="domain" description="SPX" evidence="2">
    <location>
        <begin position="2"/>
        <end position="145"/>
    </location>
</feature>
<feature type="region of interest" description="Disordered" evidence="3">
    <location>
        <begin position="481"/>
        <end position="503"/>
    </location>
</feature>
<feature type="compositionally biased region" description="Acidic residues" evidence="3">
    <location>
        <begin position="481"/>
        <end position="498"/>
    </location>
</feature>
<gene>
    <name type="ordered locus">At4g11810</name>
    <name type="ORF">T26M18.20</name>
</gene>
<organism>
    <name type="scientific">Arabidopsis thaliana</name>
    <name type="common">Mouse-ear cress</name>
    <dbReference type="NCBI Taxonomy" id="3702"/>
    <lineage>
        <taxon>Eukaryota</taxon>
        <taxon>Viridiplantae</taxon>
        <taxon>Streptophyta</taxon>
        <taxon>Embryophyta</taxon>
        <taxon>Tracheophyta</taxon>
        <taxon>Spermatophyta</taxon>
        <taxon>Magnoliopsida</taxon>
        <taxon>eudicotyledons</taxon>
        <taxon>Gunneridae</taxon>
        <taxon>Pentapetalae</taxon>
        <taxon>rosids</taxon>
        <taxon>malvids</taxon>
        <taxon>Brassicales</taxon>
        <taxon>Brassicaceae</taxon>
        <taxon>Camelineae</taxon>
        <taxon>Arabidopsis</taxon>
    </lineage>
</organism>
<accession>Q9T050</accession>
<keyword id="KW-0472">Membrane</keyword>
<keyword id="KW-1185">Reference proteome</keyword>
<keyword id="KW-0812">Transmembrane</keyword>
<keyword id="KW-1133">Transmembrane helix</keyword>
<sequence>MVAFGKKLKERSIEEWQEYYINYKLMKKKVKQYGPQIEVGSLDRRHVLKDFSRMLDHQIEKIALFMLEQQGLLSSRLQKLREWHDTLQDEPDLSQIAKLREAYRAVGQDLLKLLFFIDMNAIGIRKILKKFDKRFGYRFTNYYVKTRADHPYSQLQQVFRHVGLGAVVGAISRNLHELQNNEGSYLSIYDQPVLPLQDPVVDSIKNAVDRLTHSTNFLNFMAQHALIMQDDEDLLMLPPDEQAEKEEGRYHFMSLLLNLANTFLYMVNTYIIVPTADDYSMSLGAAATVCGVVIGAMAVAQLFSSVYFSAWSNKSYFKPLIFSSIVLFFGNLLYALAYDFNSLALLLIGRLFCGFGSARAVNRRYISDCVPLKIRMQASAGFVSASALGMACGPALAGLLQTDFKIKNVTFNQDTLPGWVMAVAWLLYLVWLAISFREPAREPEEIHTSQESTSEQIFCGEADQDGNIEKGLKKPLLLASEETEHDEEDDGDGSEESSDDSRKPANSFVAAYKLLTPSVKVQLLIYFMLKYAMEILLSESSVVTTYYFGWSMSSVSIFLFCLGLTVLPVNLVVGSYISNMFEDRQILLASEIMVCIGIVLSFHVVIPYTVPQYVISGFIMFVSAEVLEGVNLSLLSRVMSSRLSRGTYNGGLLSTEAGTIARVIADATITLAGFLGQSMLLNVTLLPSLIICVLSILATCYTYNSLY</sequence>
<protein>
    <recommendedName>
        <fullName>SPX domain-containing membrane protein At4g11810</fullName>
    </recommendedName>
</protein>
<proteinExistence type="inferred from homology"/>
<comment type="subcellular location">
    <subcellularLocation>
        <location evidence="4">Membrane</location>
        <topology evidence="4">Multi-pass membrane protein</topology>
    </subcellularLocation>
</comment>
<comment type="similarity">
    <text evidence="4">Belongs to the major facilitator superfamily.</text>
</comment>
<dbReference type="EMBL" id="AL078606">
    <property type="protein sequence ID" value="CAB44319.1"/>
    <property type="molecule type" value="Genomic_DNA"/>
</dbReference>
<dbReference type="EMBL" id="AL161532">
    <property type="protein sequence ID" value="CAB78224.1"/>
    <property type="molecule type" value="Genomic_DNA"/>
</dbReference>
<dbReference type="EMBL" id="CP002687">
    <property type="protein sequence ID" value="AEE83051.1"/>
    <property type="molecule type" value="Genomic_DNA"/>
</dbReference>
<dbReference type="PIR" id="T09340">
    <property type="entry name" value="T09340"/>
</dbReference>
<dbReference type="RefSeq" id="NP_192918.1">
    <property type="nucleotide sequence ID" value="NM_117250.3"/>
</dbReference>
<dbReference type="BioGRID" id="12085">
    <property type="interactions" value="1"/>
</dbReference>
<dbReference type="FunCoup" id="Q9T050">
    <property type="interactions" value="4"/>
</dbReference>
<dbReference type="STRING" id="3702.Q9T050"/>
<dbReference type="iPTMnet" id="Q9T050"/>
<dbReference type="PaxDb" id="3702-AT4G11810.1"/>
<dbReference type="ProteomicsDB" id="228319"/>
<dbReference type="EnsemblPlants" id="AT4G11810.1">
    <property type="protein sequence ID" value="AT4G11810.1"/>
    <property type="gene ID" value="AT4G11810"/>
</dbReference>
<dbReference type="GeneID" id="826787"/>
<dbReference type="Gramene" id="AT4G11810.1">
    <property type="protein sequence ID" value="AT4G11810.1"/>
    <property type="gene ID" value="AT4G11810"/>
</dbReference>
<dbReference type="KEGG" id="ath:AT4G11810"/>
<dbReference type="Araport" id="AT4G11810"/>
<dbReference type="TAIR" id="AT4G11810">
    <property type="gene designation" value="PHT5"/>
</dbReference>
<dbReference type="eggNOG" id="KOG1161">
    <property type="taxonomic scope" value="Eukaryota"/>
</dbReference>
<dbReference type="eggNOG" id="KOG2325">
    <property type="taxonomic scope" value="Eukaryota"/>
</dbReference>
<dbReference type="HOGENOM" id="CLU_025236_1_0_1"/>
<dbReference type="InParanoid" id="Q9T050"/>
<dbReference type="OMA" id="AYDVNSI"/>
<dbReference type="PhylomeDB" id="Q9T050"/>
<dbReference type="PRO" id="PR:Q9T050"/>
<dbReference type="Proteomes" id="UP000006548">
    <property type="component" value="Chromosome 4"/>
</dbReference>
<dbReference type="ExpressionAtlas" id="Q9T050">
    <property type="expression patterns" value="baseline and differential"/>
</dbReference>
<dbReference type="GO" id="GO:0009705">
    <property type="term" value="C:plant-type vacuole membrane"/>
    <property type="evidence" value="ECO:0000314"/>
    <property type="project" value="TAIR"/>
</dbReference>
<dbReference type="GO" id="GO:0022857">
    <property type="term" value="F:transmembrane transporter activity"/>
    <property type="evidence" value="ECO:0007669"/>
    <property type="project" value="InterPro"/>
</dbReference>
<dbReference type="GO" id="GO:0006817">
    <property type="term" value="P:phosphate ion transport"/>
    <property type="evidence" value="ECO:0000315"/>
    <property type="project" value="TAIR"/>
</dbReference>
<dbReference type="GO" id="GO:1905011">
    <property type="term" value="P:transmembrane phosphate ion transport from cytosol to vacuole"/>
    <property type="evidence" value="ECO:0000316"/>
    <property type="project" value="TAIR"/>
</dbReference>
<dbReference type="CDD" id="cd14479">
    <property type="entry name" value="SPX-MFS_plant"/>
    <property type="match status" value="1"/>
</dbReference>
<dbReference type="Gene3D" id="1.20.1250.20">
    <property type="entry name" value="MFS general substrate transporter like domains"/>
    <property type="match status" value="1"/>
</dbReference>
<dbReference type="InterPro" id="IPR011701">
    <property type="entry name" value="MFS"/>
</dbReference>
<dbReference type="InterPro" id="IPR051068">
    <property type="entry name" value="MFS_Domain-Containing_Protein"/>
</dbReference>
<dbReference type="InterPro" id="IPR036259">
    <property type="entry name" value="MFS_trans_sf"/>
</dbReference>
<dbReference type="InterPro" id="IPR004331">
    <property type="entry name" value="SPX_dom"/>
</dbReference>
<dbReference type="InterPro" id="IPR045264">
    <property type="entry name" value="SPXM_SPX_plant"/>
</dbReference>
<dbReference type="PANTHER" id="PTHR23510">
    <property type="entry name" value="INNER MEMBRANE TRANSPORT PROTEIN YAJR"/>
    <property type="match status" value="1"/>
</dbReference>
<dbReference type="PANTHER" id="PTHR23510:SF75">
    <property type="entry name" value="SPX DOMAIN-CONTAINING PROTEIN"/>
    <property type="match status" value="1"/>
</dbReference>
<dbReference type="Pfam" id="PF07690">
    <property type="entry name" value="MFS_1"/>
    <property type="match status" value="1"/>
</dbReference>
<dbReference type="Pfam" id="PF03105">
    <property type="entry name" value="SPX"/>
    <property type="match status" value="1"/>
</dbReference>
<dbReference type="SUPFAM" id="SSF103473">
    <property type="entry name" value="MFS general substrate transporter"/>
    <property type="match status" value="1"/>
</dbReference>
<dbReference type="PROSITE" id="PS51382">
    <property type="entry name" value="SPX"/>
    <property type="match status" value="1"/>
</dbReference>
<reference key="1">
    <citation type="journal article" date="1999" name="Nature">
        <title>Sequence and analysis of chromosome 4 of the plant Arabidopsis thaliana.</title>
        <authorList>
            <person name="Mayer K.F.X."/>
            <person name="Schueller C."/>
            <person name="Wambutt R."/>
            <person name="Murphy G."/>
            <person name="Volckaert G."/>
            <person name="Pohl T."/>
            <person name="Duesterhoeft A."/>
            <person name="Stiekema W."/>
            <person name="Entian K.-D."/>
            <person name="Terryn N."/>
            <person name="Harris B."/>
            <person name="Ansorge W."/>
            <person name="Brandt P."/>
            <person name="Grivell L.A."/>
            <person name="Rieger M."/>
            <person name="Weichselgartner M."/>
            <person name="de Simone V."/>
            <person name="Obermaier B."/>
            <person name="Mache R."/>
            <person name="Mueller M."/>
            <person name="Kreis M."/>
            <person name="Delseny M."/>
            <person name="Puigdomenech P."/>
            <person name="Watson M."/>
            <person name="Schmidtheini T."/>
            <person name="Reichert B."/>
            <person name="Portetelle D."/>
            <person name="Perez-Alonso M."/>
            <person name="Boutry M."/>
            <person name="Bancroft I."/>
            <person name="Vos P."/>
            <person name="Hoheisel J."/>
            <person name="Zimmermann W."/>
            <person name="Wedler H."/>
            <person name="Ridley P."/>
            <person name="Langham S.-A."/>
            <person name="McCullagh B."/>
            <person name="Bilham L."/>
            <person name="Robben J."/>
            <person name="van der Schueren J."/>
            <person name="Grymonprez B."/>
            <person name="Chuang Y.-J."/>
            <person name="Vandenbussche F."/>
            <person name="Braeken M."/>
            <person name="Weltjens I."/>
            <person name="Voet M."/>
            <person name="Bastiaens I."/>
            <person name="Aert R."/>
            <person name="Defoor E."/>
            <person name="Weitzenegger T."/>
            <person name="Bothe G."/>
            <person name="Ramsperger U."/>
            <person name="Hilbert H."/>
            <person name="Braun M."/>
            <person name="Holzer E."/>
            <person name="Brandt A."/>
            <person name="Peters S."/>
            <person name="van Staveren M."/>
            <person name="Dirkse W."/>
            <person name="Mooijman P."/>
            <person name="Klein Lankhorst R."/>
            <person name="Rose M."/>
            <person name="Hauf J."/>
            <person name="Koetter P."/>
            <person name="Berneiser S."/>
            <person name="Hempel S."/>
            <person name="Feldpausch M."/>
            <person name="Lamberth S."/>
            <person name="Van den Daele H."/>
            <person name="De Keyser A."/>
            <person name="Buysshaert C."/>
            <person name="Gielen J."/>
            <person name="Villarroel R."/>
            <person name="De Clercq R."/>
            <person name="van Montagu M."/>
            <person name="Rogers J."/>
            <person name="Cronin A."/>
            <person name="Quail M.A."/>
            <person name="Bray-Allen S."/>
            <person name="Clark L."/>
            <person name="Doggett J."/>
            <person name="Hall S."/>
            <person name="Kay M."/>
            <person name="Lennard N."/>
            <person name="McLay K."/>
            <person name="Mayes R."/>
            <person name="Pettett A."/>
            <person name="Rajandream M.A."/>
            <person name="Lyne M."/>
            <person name="Benes V."/>
            <person name="Rechmann S."/>
            <person name="Borkova D."/>
            <person name="Bloecker H."/>
            <person name="Scharfe M."/>
            <person name="Grimm M."/>
            <person name="Loehnert T.-H."/>
            <person name="Dose S."/>
            <person name="de Haan M."/>
            <person name="Maarse A.C."/>
            <person name="Schaefer M."/>
            <person name="Mueller-Auer S."/>
            <person name="Gabel C."/>
            <person name="Fuchs M."/>
            <person name="Fartmann B."/>
            <person name="Granderath K."/>
            <person name="Dauner D."/>
            <person name="Herzl A."/>
            <person name="Neumann S."/>
            <person name="Argiriou A."/>
            <person name="Vitale D."/>
            <person name="Liguori R."/>
            <person name="Piravandi E."/>
            <person name="Massenet O."/>
            <person name="Quigley F."/>
            <person name="Clabauld G."/>
            <person name="Muendlein A."/>
            <person name="Felber R."/>
            <person name="Schnabl S."/>
            <person name="Hiller R."/>
            <person name="Schmidt W."/>
            <person name="Lecharny A."/>
            <person name="Aubourg S."/>
            <person name="Chefdor F."/>
            <person name="Cooke R."/>
            <person name="Berger C."/>
            <person name="Monfort A."/>
            <person name="Casacuberta E."/>
            <person name="Gibbons T."/>
            <person name="Weber N."/>
            <person name="Vandenbol M."/>
            <person name="Bargues M."/>
            <person name="Terol J."/>
            <person name="Torres A."/>
            <person name="Perez-Perez A."/>
            <person name="Purnelle B."/>
            <person name="Bent E."/>
            <person name="Johnson S."/>
            <person name="Tacon D."/>
            <person name="Jesse T."/>
            <person name="Heijnen L."/>
            <person name="Schwarz S."/>
            <person name="Scholler P."/>
            <person name="Heber S."/>
            <person name="Francs P."/>
            <person name="Bielke C."/>
            <person name="Frishman D."/>
            <person name="Haase D."/>
            <person name="Lemcke K."/>
            <person name="Mewes H.-W."/>
            <person name="Stocker S."/>
            <person name="Zaccaria P."/>
            <person name="Bevan M."/>
            <person name="Wilson R.K."/>
            <person name="de la Bastide M."/>
            <person name="Habermann K."/>
            <person name="Parnell L."/>
            <person name="Dedhia N."/>
            <person name="Gnoj L."/>
            <person name="Schutz K."/>
            <person name="Huang E."/>
            <person name="Spiegel L."/>
            <person name="Sekhon M."/>
            <person name="Murray J."/>
            <person name="Sheet P."/>
            <person name="Cordes M."/>
            <person name="Abu-Threideh J."/>
            <person name="Stoneking T."/>
            <person name="Kalicki J."/>
            <person name="Graves T."/>
            <person name="Harmon G."/>
            <person name="Edwards J."/>
            <person name="Latreille P."/>
            <person name="Courtney L."/>
            <person name="Cloud J."/>
            <person name="Abbott A."/>
            <person name="Scott K."/>
            <person name="Johnson D."/>
            <person name="Minx P."/>
            <person name="Bentley D."/>
            <person name="Fulton B."/>
            <person name="Miller N."/>
            <person name="Greco T."/>
            <person name="Kemp K."/>
            <person name="Kramer J."/>
            <person name="Fulton L."/>
            <person name="Mardis E."/>
            <person name="Dante M."/>
            <person name="Pepin K."/>
            <person name="Hillier L.W."/>
            <person name="Nelson J."/>
            <person name="Spieth J."/>
            <person name="Ryan E."/>
            <person name="Andrews S."/>
            <person name="Geisel C."/>
            <person name="Layman D."/>
            <person name="Du H."/>
            <person name="Ali J."/>
            <person name="Berghoff A."/>
            <person name="Jones K."/>
            <person name="Drone K."/>
            <person name="Cotton M."/>
            <person name="Joshu C."/>
            <person name="Antonoiu B."/>
            <person name="Zidanic M."/>
            <person name="Strong C."/>
            <person name="Sun H."/>
            <person name="Lamar B."/>
            <person name="Yordan C."/>
            <person name="Ma P."/>
            <person name="Zhong J."/>
            <person name="Preston R."/>
            <person name="Vil D."/>
            <person name="Shekher M."/>
            <person name="Matero A."/>
            <person name="Shah R."/>
            <person name="Swaby I.K."/>
            <person name="O'Shaughnessy A."/>
            <person name="Rodriguez M."/>
            <person name="Hoffman J."/>
            <person name="Till S."/>
            <person name="Granat S."/>
            <person name="Shohdy N."/>
            <person name="Hasegawa A."/>
            <person name="Hameed A."/>
            <person name="Lodhi M."/>
            <person name="Johnson A."/>
            <person name="Chen E."/>
            <person name="Marra M.A."/>
            <person name="Martienssen R."/>
            <person name="McCombie W.R."/>
        </authorList>
    </citation>
    <scope>NUCLEOTIDE SEQUENCE [LARGE SCALE GENOMIC DNA]</scope>
    <source>
        <strain>cv. Columbia</strain>
    </source>
</reference>
<reference key="2">
    <citation type="journal article" date="2017" name="Plant J.">
        <title>Araport11: a complete reannotation of the Arabidopsis thaliana reference genome.</title>
        <authorList>
            <person name="Cheng C.Y."/>
            <person name="Krishnakumar V."/>
            <person name="Chan A.P."/>
            <person name="Thibaud-Nissen F."/>
            <person name="Schobel S."/>
            <person name="Town C.D."/>
        </authorList>
    </citation>
    <scope>GENOME REANNOTATION</scope>
    <source>
        <strain>cv. Columbia</strain>
    </source>
</reference>
<name>SPXM2_ARATH</name>